<proteinExistence type="inferred from homology"/>
<reference key="1">
    <citation type="submission" date="2003-06" db="EMBL/GenBank/DDBJ databases">
        <title>The complete genome sequence of Haemophilus ducreyi.</title>
        <authorList>
            <person name="Munson R.S. Jr."/>
            <person name="Ray W.C."/>
            <person name="Mahairas G."/>
            <person name="Sabo P."/>
            <person name="Mungur R."/>
            <person name="Johnson L."/>
            <person name="Nguyen D."/>
            <person name="Wang J."/>
            <person name="Forst C."/>
            <person name="Hood L."/>
        </authorList>
    </citation>
    <scope>NUCLEOTIDE SEQUENCE [LARGE SCALE GENOMIC DNA]</scope>
    <source>
        <strain>35000HP / ATCC 700724</strain>
    </source>
</reference>
<dbReference type="EMBL" id="AE017143">
    <property type="protein sequence ID" value="AAP96527.1"/>
    <property type="molecule type" value="Genomic_DNA"/>
</dbReference>
<dbReference type="RefSeq" id="WP_010945556.1">
    <property type="nucleotide sequence ID" value="NC_002940.2"/>
</dbReference>
<dbReference type="SMR" id="Q7VKU3"/>
<dbReference type="STRING" id="233412.HD_1773"/>
<dbReference type="KEGG" id="hdu:HD_1773"/>
<dbReference type="eggNOG" id="COG0823">
    <property type="taxonomic scope" value="Bacteria"/>
</dbReference>
<dbReference type="HOGENOM" id="CLU_047123_0_0_6"/>
<dbReference type="OrthoDB" id="9802240at2"/>
<dbReference type="Proteomes" id="UP000001022">
    <property type="component" value="Chromosome"/>
</dbReference>
<dbReference type="GO" id="GO:0042597">
    <property type="term" value="C:periplasmic space"/>
    <property type="evidence" value="ECO:0007669"/>
    <property type="project" value="UniProtKB-SubCell"/>
</dbReference>
<dbReference type="GO" id="GO:0051301">
    <property type="term" value="P:cell division"/>
    <property type="evidence" value="ECO:0007669"/>
    <property type="project" value="UniProtKB-UniRule"/>
</dbReference>
<dbReference type="GO" id="GO:0017038">
    <property type="term" value="P:protein import"/>
    <property type="evidence" value="ECO:0007669"/>
    <property type="project" value="InterPro"/>
</dbReference>
<dbReference type="Gene3D" id="2.120.10.30">
    <property type="entry name" value="TolB, C-terminal domain"/>
    <property type="match status" value="1"/>
</dbReference>
<dbReference type="Gene3D" id="3.40.50.10070">
    <property type="entry name" value="TolB, N-terminal domain"/>
    <property type="match status" value="1"/>
</dbReference>
<dbReference type="HAMAP" id="MF_00671">
    <property type="entry name" value="TolB"/>
    <property type="match status" value="1"/>
</dbReference>
<dbReference type="InterPro" id="IPR011042">
    <property type="entry name" value="6-blade_b-propeller_TolB-like"/>
</dbReference>
<dbReference type="InterPro" id="IPR011659">
    <property type="entry name" value="PD40"/>
</dbReference>
<dbReference type="InterPro" id="IPR014167">
    <property type="entry name" value="Tol-Pal_TolB"/>
</dbReference>
<dbReference type="InterPro" id="IPR007195">
    <property type="entry name" value="TolB_N"/>
</dbReference>
<dbReference type="NCBIfam" id="TIGR02800">
    <property type="entry name" value="propeller_TolB"/>
    <property type="match status" value="1"/>
</dbReference>
<dbReference type="PANTHER" id="PTHR36842:SF1">
    <property type="entry name" value="PROTEIN TOLB"/>
    <property type="match status" value="1"/>
</dbReference>
<dbReference type="PANTHER" id="PTHR36842">
    <property type="entry name" value="PROTEIN TOLB HOMOLOG"/>
    <property type="match status" value="1"/>
</dbReference>
<dbReference type="Pfam" id="PF07676">
    <property type="entry name" value="PD40"/>
    <property type="match status" value="4"/>
</dbReference>
<dbReference type="Pfam" id="PF04052">
    <property type="entry name" value="TolB_N"/>
    <property type="match status" value="1"/>
</dbReference>
<dbReference type="SUPFAM" id="SSF52964">
    <property type="entry name" value="TolB, N-terminal domain"/>
    <property type="match status" value="1"/>
</dbReference>
<dbReference type="SUPFAM" id="SSF69304">
    <property type="entry name" value="Tricorn protease N-terminal domain"/>
    <property type="match status" value="1"/>
</dbReference>
<name>TOLB_HAEDU</name>
<feature type="signal peptide" evidence="1">
    <location>
        <begin position="1"/>
        <end position="24"/>
    </location>
</feature>
<feature type="chain" id="PRO_0000034655" description="Tol-Pal system protein TolB" evidence="1">
    <location>
        <begin position="25"/>
        <end position="426"/>
    </location>
</feature>
<sequence>MKLKSRYTSLISVVSIFFSSMVMAESDIVISVDEGVSIAQPIAVVPFKVNGGVSEDVGQVVADDLRNSGKFTPIQRAKLPSHPASVAEINSQQWTDIGVDVVVVGQITPANNGYNVAYQLVDTLSNPAVVLVQGSFNVPATQMRQAAHTVSDQIFEKLTQIRGAFRTKIAYVVQRGVSAYELRVADYDGFNAFTVVKSKEPLMSPEWSPNGSKLAYVTFENKRPQIVVHDLRSGQRSVVAALKGHNGAPAFSPDGSRLAFASNQDGELNIYIANINGGTPIKLTANVGNNTEPSWSPDGSIIYFTSDRAGSPQVYRMSSSGNDVIPIGTRGSYNAKASSDGKNLIMIAGDNVVKQDLTSGSTEVLSSTFLDESPSISPNGIMIIYSSTKGTSKVLQLVSADGRFKANLPGAEGQFKFPAWSPYLTK</sequence>
<gene>
    <name evidence="1" type="primary">tolB</name>
    <name type="ordered locus">HD_1773</name>
</gene>
<keyword id="KW-0131">Cell cycle</keyword>
<keyword id="KW-0132">Cell division</keyword>
<keyword id="KW-0574">Periplasm</keyword>
<keyword id="KW-1185">Reference proteome</keyword>
<keyword id="KW-0732">Signal</keyword>
<evidence type="ECO:0000255" key="1">
    <source>
        <dbReference type="HAMAP-Rule" id="MF_00671"/>
    </source>
</evidence>
<accession>Q7VKU3</accession>
<protein>
    <recommendedName>
        <fullName evidence="1">Tol-Pal system protein TolB</fullName>
    </recommendedName>
</protein>
<comment type="function">
    <text evidence="1">Part of the Tol-Pal system, which plays a role in outer membrane invagination during cell division and is important for maintaining outer membrane integrity.</text>
</comment>
<comment type="subunit">
    <text evidence="1">The Tol-Pal system is composed of five core proteins: the inner membrane proteins TolA, TolQ and TolR, the periplasmic protein TolB and the outer membrane protein Pal. They form a network linking the inner and outer membranes and the peptidoglycan layer.</text>
</comment>
<comment type="subcellular location">
    <subcellularLocation>
        <location evidence="1">Periplasm</location>
    </subcellularLocation>
</comment>
<comment type="similarity">
    <text evidence="1">Belongs to the TolB family.</text>
</comment>
<organism>
    <name type="scientific">Haemophilus ducreyi (strain 35000HP / ATCC 700724)</name>
    <dbReference type="NCBI Taxonomy" id="233412"/>
    <lineage>
        <taxon>Bacteria</taxon>
        <taxon>Pseudomonadati</taxon>
        <taxon>Pseudomonadota</taxon>
        <taxon>Gammaproteobacteria</taxon>
        <taxon>Pasteurellales</taxon>
        <taxon>Pasteurellaceae</taxon>
        <taxon>Haemophilus</taxon>
    </lineage>
</organism>